<reference key="1">
    <citation type="submission" date="2008-05" db="EMBL/GenBank/DDBJ databases">
        <title>Genome sequence of Clostridium botulinum Ba4 strain 657.</title>
        <authorList>
            <person name="Shrivastava S."/>
            <person name="Brown J.L."/>
            <person name="Bruce D."/>
            <person name="Detter C."/>
            <person name="Munk C."/>
            <person name="Smith L.A."/>
            <person name="Smith T.J."/>
            <person name="Sutton G."/>
            <person name="Brettin T.S."/>
        </authorList>
    </citation>
    <scope>NUCLEOTIDE SEQUENCE [LARGE SCALE GENOMIC DNA]</scope>
    <source>
        <strain>657 / Type Ba4</strain>
    </source>
</reference>
<protein>
    <recommendedName>
        <fullName evidence="1">Queuine tRNA-ribosyltransferase</fullName>
        <ecNumber evidence="1">2.4.2.29</ecNumber>
    </recommendedName>
    <alternativeName>
        <fullName evidence="1">Guanine insertion enzyme</fullName>
    </alternativeName>
    <alternativeName>
        <fullName evidence="1">tRNA-guanine transglycosylase</fullName>
    </alternativeName>
</protein>
<proteinExistence type="inferred from homology"/>
<comment type="function">
    <text evidence="1">Catalyzes the base-exchange of a guanine (G) residue with the queuine precursor 7-aminomethyl-7-deazaguanine (PreQ1) at position 34 (anticodon wobble position) in tRNAs with GU(N) anticodons (tRNA-Asp, -Asn, -His and -Tyr). Catalysis occurs through a double-displacement mechanism. The nucleophile active site attacks the C1' of nucleotide 34 to detach the guanine base from the RNA, forming a covalent enzyme-RNA intermediate. The proton acceptor active site deprotonates the incoming PreQ1, allowing a nucleophilic attack on the C1' of the ribose to form the product. After dissociation, two additional enzymatic reactions on the tRNA convert PreQ1 to queuine (Q), resulting in the hypermodified nucleoside queuosine (7-(((4,5-cis-dihydroxy-2-cyclopenten-1-yl)amino)methyl)-7-deazaguanosine).</text>
</comment>
<comment type="catalytic activity">
    <reaction evidence="1">
        <text>7-aminomethyl-7-carbaguanine + guanosine(34) in tRNA = 7-aminomethyl-7-carbaguanosine(34) in tRNA + guanine</text>
        <dbReference type="Rhea" id="RHEA:24104"/>
        <dbReference type="Rhea" id="RHEA-COMP:10341"/>
        <dbReference type="Rhea" id="RHEA-COMP:10342"/>
        <dbReference type="ChEBI" id="CHEBI:16235"/>
        <dbReference type="ChEBI" id="CHEBI:58703"/>
        <dbReference type="ChEBI" id="CHEBI:74269"/>
        <dbReference type="ChEBI" id="CHEBI:82833"/>
        <dbReference type="EC" id="2.4.2.29"/>
    </reaction>
</comment>
<comment type="cofactor">
    <cofactor evidence="1">
        <name>Zn(2+)</name>
        <dbReference type="ChEBI" id="CHEBI:29105"/>
    </cofactor>
    <text evidence="1">Binds 1 zinc ion per subunit.</text>
</comment>
<comment type="pathway">
    <text evidence="1">tRNA modification; tRNA-queuosine biosynthesis.</text>
</comment>
<comment type="subunit">
    <text evidence="1">Homodimer. Within each dimer, one monomer is responsible for RNA recognition and catalysis, while the other monomer binds to the replacement base PreQ1.</text>
</comment>
<comment type="similarity">
    <text evidence="1">Belongs to the queuine tRNA-ribosyltransferase family.</text>
</comment>
<gene>
    <name evidence="1" type="primary">tgt</name>
    <name type="ordered locus">CLJ_B3333</name>
</gene>
<sequence>MYKLLKKSGKARRGEFTTPHGVIQTPVFMNVGTLAAIKGAVSSMDLKEIGCQVELSNTYHLHLRPGDEVVKKMGGLHKFMNWDRPILTDSGGFQVFSLSKIRKIQEEGVYFNSHIDGRKIFMGPEESMRIQSNLASTIAMAFDECVENPAPREYVEKSVERTTRWLHRCKDEMNRLNSLPDTINNKQMLFGINQGGTYEDIRIEHAKTIAKMDLDGYAIGGLAVGESHEDMYRIIDAVVPHLPEDKPIYLMGVGIPSNILEAVDRGVDFFDCVLPARNGRHAHVFTKEGKINLLNAKFELDDRPIDEGCQCPACKHYTRSYIRHLFKAKEMLAMRLCVLHNLYFYNNLMEEIRDAIDGDYFKEYKERKLKEWGGRA</sequence>
<dbReference type="EC" id="2.4.2.29" evidence="1"/>
<dbReference type="EMBL" id="CP001083">
    <property type="protein sequence ID" value="ACQ51829.1"/>
    <property type="molecule type" value="Genomic_DNA"/>
</dbReference>
<dbReference type="RefSeq" id="WP_003358072.1">
    <property type="nucleotide sequence ID" value="NC_012658.1"/>
</dbReference>
<dbReference type="SMR" id="C3KTD0"/>
<dbReference type="KEGG" id="cbi:CLJ_B3333"/>
<dbReference type="HOGENOM" id="CLU_022060_0_1_9"/>
<dbReference type="UniPathway" id="UPA00392"/>
<dbReference type="Proteomes" id="UP000002333">
    <property type="component" value="Chromosome"/>
</dbReference>
<dbReference type="GO" id="GO:0005829">
    <property type="term" value="C:cytosol"/>
    <property type="evidence" value="ECO:0007669"/>
    <property type="project" value="TreeGrafter"/>
</dbReference>
<dbReference type="GO" id="GO:0046872">
    <property type="term" value="F:metal ion binding"/>
    <property type="evidence" value="ECO:0007669"/>
    <property type="project" value="UniProtKB-KW"/>
</dbReference>
<dbReference type="GO" id="GO:0008479">
    <property type="term" value="F:tRNA-guanosine(34) queuine transglycosylase activity"/>
    <property type="evidence" value="ECO:0007669"/>
    <property type="project" value="UniProtKB-UniRule"/>
</dbReference>
<dbReference type="GO" id="GO:0008616">
    <property type="term" value="P:queuosine biosynthetic process"/>
    <property type="evidence" value="ECO:0007669"/>
    <property type="project" value="UniProtKB-UniRule"/>
</dbReference>
<dbReference type="GO" id="GO:0002099">
    <property type="term" value="P:tRNA wobble guanine modification"/>
    <property type="evidence" value="ECO:0007669"/>
    <property type="project" value="TreeGrafter"/>
</dbReference>
<dbReference type="GO" id="GO:0101030">
    <property type="term" value="P:tRNA-guanine transglycosylation"/>
    <property type="evidence" value="ECO:0007669"/>
    <property type="project" value="InterPro"/>
</dbReference>
<dbReference type="FunFam" id="3.20.20.105:FF:000001">
    <property type="entry name" value="Queuine tRNA-ribosyltransferase"/>
    <property type="match status" value="1"/>
</dbReference>
<dbReference type="Gene3D" id="3.20.20.105">
    <property type="entry name" value="Queuine tRNA-ribosyltransferase-like"/>
    <property type="match status" value="1"/>
</dbReference>
<dbReference type="HAMAP" id="MF_00168">
    <property type="entry name" value="Q_tRNA_Tgt"/>
    <property type="match status" value="1"/>
</dbReference>
<dbReference type="InterPro" id="IPR050076">
    <property type="entry name" value="ArchSynthase1/Queuine_TRR"/>
</dbReference>
<dbReference type="InterPro" id="IPR004803">
    <property type="entry name" value="TGT"/>
</dbReference>
<dbReference type="InterPro" id="IPR036511">
    <property type="entry name" value="TGT-like_sf"/>
</dbReference>
<dbReference type="InterPro" id="IPR002616">
    <property type="entry name" value="tRNA_ribo_trans-like"/>
</dbReference>
<dbReference type="NCBIfam" id="TIGR00430">
    <property type="entry name" value="Q_tRNA_tgt"/>
    <property type="match status" value="1"/>
</dbReference>
<dbReference type="NCBIfam" id="TIGR00449">
    <property type="entry name" value="tgt_general"/>
    <property type="match status" value="1"/>
</dbReference>
<dbReference type="PANTHER" id="PTHR46499">
    <property type="entry name" value="QUEUINE TRNA-RIBOSYLTRANSFERASE"/>
    <property type="match status" value="1"/>
</dbReference>
<dbReference type="PANTHER" id="PTHR46499:SF1">
    <property type="entry name" value="QUEUINE TRNA-RIBOSYLTRANSFERASE"/>
    <property type="match status" value="1"/>
</dbReference>
<dbReference type="Pfam" id="PF01702">
    <property type="entry name" value="TGT"/>
    <property type="match status" value="1"/>
</dbReference>
<dbReference type="SUPFAM" id="SSF51713">
    <property type="entry name" value="tRNA-guanine transglycosylase"/>
    <property type="match status" value="1"/>
</dbReference>
<accession>C3KTD0</accession>
<name>TGT_CLOB6</name>
<organism>
    <name type="scientific">Clostridium botulinum (strain 657 / Type Ba4)</name>
    <dbReference type="NCBI Taxonomy" id="515621"/>
    <lineage>
        <taxon>Bacteria</taxon>
        <taxon>Bacillati</taxon>
        <taxon>Bacillota</taxon>
        <taxon>Clostridia</taxon>
        <taxon>Eubacteriales</taxon>
        <taxon>Clostridiaceae</taxon>
        <taxon>Clostridium</taxon>
    </lineage>
</organism>
<feature type="chain" id="PRO_1000203649" description="Queuine tRNA-ribosyltransferase">
    <location>
        <begin position="1"/>
        <end position="376"/>
    </location>
</feature>
<feature type="region of interest" description="RNA binding" evidence="1">
    <location>
        <begin position="252"/>
        <end position="258"/>
    </location>
</feature>
<feature type="region of interest" description="RNA binding; important for wobble base 34 recognition" evidence="1">
    <location>
        <begin position="276"/>
        <end position="280"/>
    </location>
</feature>
<feature type="active site" description="Proton acceptor" evidence="1">
    <location>
        <position position="89"/>
    </location>
</feature>
<feature type="active site" description="Nucleophile" evidence="1">
    <location>
        <position position="271"/>
    </location>
</feature>
<feature type="binding site" evidence="1">
    <location>
        <begin position="89"/>
        <end position="93"/>
    </location>
    <ligand>
        <name>substrate</name>
    </ligand>
</feature>
<feature type="binding site" evidence="1">
    <location>
        <position position="143"/>
    </location>
    <ligand>
        <name>substrate</name>
    </ligand>
</feature>
<feature type="binding site" evidence="1">
    <location>
        <position position="194"/>
    </location>
    <ligand>
        <name>substrate</name>
    </ligand>
</feature>
<feature type="binding site" evidence="1">
    <location>
        <position position="221"/>
    </location>
    <ligand>
        <name>substrate</name>
    </ligand>
</feature>
<feature type="binding site" evidence="1">
    <location>
        <position position="309"/>
    </location>
    <ligand>
        <name>Zn(2+)</name>
        <dbReference type="ChEBI" id="CHEBI:29105"/>
    </ligand>
</feature>
<feature type="binding site" evidence="1">
    <location>
        <position position="311"/>
    </location>
    <ligand>
        <name>Zn(2+)</name>
        <dbReference type="ChEBI" id="CHEBI:29105"/>
    </ligand>
</feature>
<feature type="binding site" evidence="1">
    <location>
        <position position="314"/>
    </location>
    <ligand>
        <name>Zn(2+)</name>
        <dbReference type="ChEBI" id="CHEBI:29105"/>
    </ligand>
</feature>
<feature type="binding site" evidence="1">
    <location>
        <position position="340"/>
    </location>
    <ligand>
        <name>Zn(2+)</name>
        <dbReference type="ChEBI" id="CHEBI:29105"/>
    </ligand>
</feature>
<evidence type="ECO:0000255" key="1">
    <source>
        <dbReference type="HAMAP-Rule" id="MF_00168"/>
    </source>
</evidence>
<keyword id="KW-0328">Glycosyltransferase</keyword>
<keyword id="KW-0479">Metal-binding</keyword>
<keyword id="KW-0671">Queuosine biosynthesis</keyword>
<keyword id="KW-0808">Transferase</keyword>
<keyword id="KW-0819">tRNA processing</keyword>
<keyword id="KW-0862">Zinc</keyword>